<feature type="chain" id="PRO_0000124114" description="Proteasome subunit alpha type-4">
    <location>
        <begin position="1"/>
        <end position="250"/>
    </location>
</feature>
<feature type="helix" evidence="3">
    <location>
        <begin position="3"/>
        <end position="5"/>
    </location>
</feature>
<feature type="helix" evidence="3">
    <location>
        <begin position="19"/>
        <end position="29"/>
    </location>
</feature>
<feature type="strand" evidence="3">
    <location>
        <begin position="34"/>
        <end position="38"/>
    </location>
</feature>
<feature type="strand" evidence="3">
    <location>
        <begin position="40"/>
        <end position="47"/>
    </location>
</feature>
<feature type="strand" evidence="3">
    <location>
        <begin position="63"/>
        <end position="67"/>
    </location>
</feature>
<feature type="strand" evidence="3">
    <location>
        <begin position="69"/>
        <end position="78"/>
    </location>
</feature>
<feature type="helix" evidence="3">
    <location>
        <begin position="80"/>
        <end position="101"/>
    </location>
</feature>
<feature type="helix" evidence="3">
    <location>
        <begin position="107"/>
        <end position="123"/>
    </location>
</feature>
<feature type="strand" evidence="3">
    <location>
        <begin position="124"/>
        <end position="126"/>
    </location>
</feature>
<feature type="strand" evidence="3">
    <location>
        <begin position="132"/>
        <end position="138"/>
    </location>
</feature>
<feature type="turn" evidence="3">
    <location>
        <begin position="141"/>
        <end position="143"/>
    </location>
</feature>
<feature type="strand" evidence="3">
    <location>
        <begin position="144"/>
        <end position="150"/>
    </location>
</feature>
<feature type="strand" evidence="3">
    <location>
        <begin position="156"/>
        <end position="165"/>
    </location>
</feature>
<feature type="helix" evidence="3">
    <location>
        <begin position="168"/>
        <end position="178"/>
    </location>
</feature>
<feature type="helix" evidence="3">
    <location>
        <begin position="185"/>
        <end position="199"/>
    </location>
</feature>
<feature type="strand" evidence="3">
    <location>
        <begin position="200"/>
        <end position="204"/>
    </location>
</feature>
<feature type="helix" evidence="3">
    <location>
        <begin position="207"/>
        <end position="209"/>
    </location>
</feature>
<feature type="strand" evidence="3">
    <location>
        <begin position="211"/>
        <end position="218"/>
    </location>
</feature>
<feature type="turn" evidence="3">
    <location>
        <begin position="219"/>
        <end position="221"/>
    </location>
</feature>
<feature type="strand" evidence="3">
    <location>
        <begin position="222"/>
        <end position="227"/>
    </location>
</feature>
<feature type="helix" evidence="3">
    <location>
        <begin position="230"/>
        <end position="248"/>
    </location>
</feature>
<accession>P52427</accession>
<gene>
    <name type="primary">PAC1</name>
</gene>
<comment type="function">
    <text>The proteasome is a multicatalytic proteinase complex which is characterized by its ability to cleave peptides with Arg, Phe, Tyr, Leu, and Glu adjacent to the leaving group at neutral or slightly basic pH. The proteasome has an ATP-dependent proteolytic activity.</text>
</comment>
<comment type="subunit">
    <text evidence="1">The 26S proteasome consists of a 20S proteasome core and two 19S regulatory subunits. The 20S proteasome core is composed of 28 subunits that are arranged in four stacked rings, resulting in a barrel-shaped structure. The two end rings are each formed by seven alpha subunits, and the two central rings are each formed by seven beta subunits. The catalytic chamber with the active sites is on the inside of the barrel (By similarity).</text>
</comment>
<comment type="subcellular location">
    <subcellularLocation>
        <location evidence="1">Cytoplasm</location>
    </subcellularLocation>
    <subcellularLocation>
        <location evidence="1">Nucleus</location>
    </subcellularLocation>
</comment>
<comment type="similarity">
    <text evidence="2">Belongs to the peptidase T1A family.</text>
</comment>
<dbReference type="EMBL" id="X96974">
    <property type="protein sequence ID" value="CAA65660.1"/>
    <property type="molecule type" value="mRNA"/>
</dbReference>
<dbReference type="PIR" id="T09160">
    <property type="entry name" value="T09160"/>
</dbReference>
<dbReference type="PDB" id="7QVE">
    <property type="method" value="EM"/>
    <property type="resolution" value="3.30 A"/>
    <property type="chains" value="D/j=1-250"/>
</dbReference>
<dbReference type="PDBsum" id="7QVE"/>
<dbReference type="SMR" id="P52427"/>
<dbReference type="MEROPS" id="T01.973"/>
<dbReference type="Proteomes" id="UP001155700">
    <property type="component" value="Unplaced"/>
</dbReference>
<dbReference type="GO" id="GO:0005829">
    <property type="term" value="C:cytosol"/>
    <property type="evidence" value="ECO:0000318"/>
    <property type="project" value="GO_Central"/>
</dbReference>
<dbReference type="GO" id="GO:0005634">
    <property type="term" value="C:nucleus"/>
    <property type="evidence" value="ECO:0000318"/>
    <property type="project" value="GO_Central"/>
</dbReference>
<dbReference type="GO" id="GO:0019773">
    <property type="term" value="C:proteasome core complex, alpha-subunit complex"/>
    <property type="evidence" value="ECO:0000250"/>
    <property type="project" value="UniProtKB"/>
</dbReference>
<dbReference type="GO" id="GO:0043161">
    <property type="term" value="P:proteasome-mediated ubiquitin-dependent protein catabolic process"/>
    <property type="evidence" value="ECO:0000318"/>
    <property type="project" value="GO_Central"/>
</dbReference>
<dbReference type="CDD" id="cd03752">
    <property type="entry name" value="proteasome_alpha_type_4"/>
    <property type="match status" value="1"/>
</dbReference>
<dbReference type="FunFam" id="3.60.20.10:FF:000031">
    <property type="entry name" value="Proteasome subunit alpha type"/>
    <property type="match status" value="1"/>
</dbReference>
<dbReference type="Gene3D" id="3.60.20.10">
    <property type="entry name" value="Glutamine Phosphoribosylpyrophosphate, subunit 1, domain 1"/>
    <property type="match status" value="1"/>
</dbReference>
<dbReference type="InterPro" id="IPR029055">
    <property type="entry name" value="Ntn_hydrolases_N"/>
</dbReference>
<dbReference type="InterPro" id="IPR050115">
    <property type="entry name" value="Proteasome_alpha"/>
</dbReference>
<dbReference type="InterPro" id="IPR023332">
    <property type="entry name" value="Proteasome_alpha-type"/>
</dbReference>
<dbReference type="InterPro" id="IPR000426">
    <property type="entry name" value="Proteasome_asu_N"/>
</dbReference>
<dbReference type="InterPro" id="IPR016050">
    <property type="entry name" value="Proteasome_bsu_CS"/>
</dbReference>
<dbReference type="InterPro" id="IPR001353">
    <property type="entry name" value="Proteasome_sua/b"/>
</dbReference>
<dbReference type="NCBIfam" id="NF003075">
    <property type="entry name" value="PRK03996.1"/>
    <property type="match status" value="1"/>
</dbReference>
<dbReference type="PANTHER" id="PTHR11599">
    <property type="entry name" value="PROTEASOME SUBUNIT ALPHA/BETA"/>
    <property type="match status" value="1"/>
</dbReference>
<dbReference type="Pfam" id="PF00227">
    <property type="entry name" value="Proteasome"/>
    <property type="match status" value="1"/>
</dbReference>
<dbReference type="Pfam" id="PF10584">
    <property type="entry name" value="Proteasome_A_N"/>
    <property type="match status" value="1"/>
</dbReference>
<dbReference type="SMART" id="SM00948">
    <property type="entry name" value="Proteasome_A_N"/>
    <property type="match status" value="1"/>
</dbReference>
<dbReference type="SUPFAM" id="SSF56235">
    <property type="entry name" value="N-terminal nucleophile aminohydrolases (Ntn hydrolases)"/>
    <property type="match status" value="1"/>
</dbReference>
<dbReference type="PROSITE" id="PS00388">
    <property type="entry name" value="PROTEASOME_ALPHA_1"/>
    <property type="match status" value="1"/>
</dbReference>
<dbReference type="PROSITE" id="PS51475">
    <property type="entry name" value="PROTEASOME_ALPHA_2"/>
    <property type="match status" value="1"/>
</dbReference>
<keyword id="KW-0002">3D-structure</keyword>
<keyword id="KW-0963">Cytoplasm</keyword>
<keyword id="KW-0539">Nucleus</keyword>
<keyword id="KW-0647">Proteasome</keyword>
<keyword id="KW-1185">Reference proteome</keyword>
<name>PSA4_SPIOL</name>
<protein>
    <recommendedName>
        <fullName>Proteasome subunit alpha type-4</fullName>
    </recommendedName>
    <alternativeName>
        <fullName>20S proteasome alpha subunit C</fullName>
    </alternativeName>
    <alternativeName>
        <fullName>20S proteasome subunit alpha-3</fullName>
    </alternativeName>
    <alternativeName>
        <fullName>Proteasome 27 kDa subunit</fullName>
    </alternativeName>
</protein>
<sequence length="250" mass="27448">MSRRYDSRTTIFSPEGRLYQVEYAMEAIGNAGSAIGILAKDGVVLIGEKKVTSKLLQTSTSTEKMYKIDDHVACAVAGIMSDANILINTARVQAQRYTFSYQEPMPVEQLVQSLCDTKQGYTQFGGLRPFGVSFLFAGWDKNYGFQLYMSDPSGNYGGWKATAIGANNQAAQSMLKQDYKDDVTREDAVKLALKALSKTMDSTSLTSEKLELAEVYLLPSGKVKYQVHSPESLNRLLTESGLTQPAAETS</sequence>
<reference key="1">
    <citation type="submission" date="1996-04" db="EMBL/GenBank/DDBJ databases">
        <authorList>
            <person name="Baur B."/>
            <person name="Fischer K."/>
        </authorList>
    </citation>
    <scope>NUCLEOTIDE SEQUENCE [MRNA]</scope>
</reference>
<evidence type="ECO:0000250" key="1"/>
<evidence type="ECO:0000255" key="2">
    <source>
        <dbReference type="PROSITE-ProRule" id="PRU00808"/>
    </source>
</evidence>
<evidence type="ECO:0007829" key="3">
    <source>
        <dbReference type="PDB" id="7QVE"/>
    </source>
</evidence>
<proteinExistence type="evidence at protein level"/>
<organism>
    <name type="scientific">Spinacia oleracea</name>
    <name type="common">Spinach</name>
    <dbReference type="NCBI Taxonomy" id="3562"/>
    <lineage>
        <taxon>Eukaryota</taxon>
        <taxon>Viridiplantae</taxon>
        <taxon>Streptophyta</taxon>
        <taxon>Embryophyta</taxon>
        <taxon>Tracheophyta</taxon>
        <taxon>Spermatophyta</taxon>
        <taxon>Magnoliopsida</taxon>
        <taxon>eudicotyledons</taxon>
        <taxon>Gunneridae</taxon>
        <taxon>Pentapetalae</taxon>
        <taxon>Caryophyllales</taxon>
        <taxon>Chenopodiaceae</taxon>
        <taxon>Chenopodioideae</taxon>
        <taxon>Anserineae</taxon>
        <taxon>Spinacia</taxon>
    </lineage>
</organism>